<evidence type="ECO:0000255" key="1">
    <source>
        <dbReference type="HAMAP-Rule" id="MF_01196"/>
    </source>
</evidence>
<feature type="chain" id="PRO_1000138454" description="Cell division protein ZapB">
    <location>
        <begin position="1"/>
        <end position="79"/>
    </location>
</feature>
<feature type="coiled-coil region" evidence="1">
    <location>
        <begin position="6"/>
        <end position="78"/>
    </location>
</feature>
<gene>
    <name evidence="1" type="primary">zapB</name>
    <name type="ordered locus">YPTS_0092</name>
</gene>
<name>ZAPB_YERPB</name>
<reference key="1">
    <citation type="submission" date="2008-04" db="EMBL/GenBank/DDBJ databases">
        <title>Complete sequence of Yersinia pseudotuberculosis PB1/+.</title>
        <authorList>
            <person name="Copeland A."/>
            <person name="Lucas S."/>
            <person name="Lapidus A."/>
            <person name="Glavina del Rio T."/>
            <person name="Dalin E."/>
            <person name="Tice H."/>
            <person name="Bruce D."/>
            <person name="Goodwin L."/>
            <person name="Pitluck S."/>
            <person name="Munk A.C."/>
            <person name="Brettin T."/>
            <person name="Detter J.C."/>
            <person name="Han C."/>
            <person name="Tapia R."/>
            <person name="Schmutz J."/>
            <person name="Larimer F."/>
            <person name="Land M."/>
            <person name="Hauser L."/>
            <person name="Challacombe J.F."/>
            <person name="Green L."/>
            <person name="Lindler L.E."/>
            <person name="Nikolich M.P."/>
            <person name="Richardson P."/>
        </authorList>
    </citation>
    <scope>NUCLEOTIDE SEQUENCE [LARGE SCALE GENOMIC DNA]</scope>
    <source>
        <strain>PB1/+</strain>
    </source>
</reference>
<sequence length="79" mass="9285">MSFEVFEKLEVKVQQAIDTITLLQMEIEELKEKNNTLTQEVQDAAGSREALVRENEQLKQEQHVWQDRLRALLGKMEEV</sequence>
<organism>
    <name type="scientific">Yersinia pseudotuberculosis serotype IB (strain PB1/+)</name>
    <dbReference type="NCBI Taxonomy" id="502801"/>
    <lineage>
        <taxon>Bacteria</taxon>
        <taxon>Pseudomonadati</taxon>
        <taxon>Pseudomonadota</taxon>
        <taxon>Gammaproteobacteria</taxon>
        <taxon>Enterobacterales</taxon>
        <taxon>Yersiniaceae</taxon>
        <taxon>Yersinia</taxon>
    </lineage>
</organism>
<dbReference type="EMBL" id="CP001048">
    <property type="protein sequence ID" value="ACC87091.1"/>
    <property type="molecule type" value="Genomic_DNA"/>
</dbReference>
<dbReference type="RefSeq" id="WP_002208953.1">
    <property type="nucleotide sequence ID" value="NZ_CP009780.1"/>
</dbReference>
<dbReference type="SMR" id="B2JZB8"/>
<dbReference type="GeneID" id="96663567"/>
<dbReference type="KEGG" id="ypb:YPTS_0092"/>
<dbReference type="PATRIC" id="fig|502801.10.peg.3768"/>
<dbReference type="GO" id="GO:0005737">
    <property type="term" value="C:cytoplasm"/>
    <property type="evidence" value="ECO:0007669"/>
    <property type="project" value="UniProtKB-SubCell"/>
</dbReference>
<dbReference type="GO" id="GO:0000917">
    <property type="term" value="P:division septum assembly"/>
    <property type="evidence" value="ECO:0007669"/>
    <property type="project" value="UniProtKB-KW"/>
</dbReference>
<dbReference type="GO" id="GO:0043093">
    <property type="term" value="P:FtsZ-dependent cytokinesis"/>
    <property type="evidence" value="ECO:0007669"/>
    <property type="project" value="UniProtKB-UniRule"/>
</dbReference>
<dbReference type="Gene3D" id="1.20.5.340">
    <property type="match status" value="1"/>
</dbReference>
<dbReference type="HAMAP" id="MF_01196">
    <property type="entry name" value="ZapB"/>
    <property type="match status" value="1"/>
</dbReference>
<dbReference type="InterPro" id="IPR009252">
    <property type="entry name" value="Cell_div_ZapB"/>
</dbReference>
<dbReference type="NCBIfam" id="NF011951">
    <property type="entry name" value="PRK15422.1"/>
    <property type="match status" value="1"/>
</dbReference>
<dbReference type="Pfam" id="PF06005">
    <property type="entry name" value="ZapB"/>
    <property type="match status" value="1"/>
</dbReference>
<keyword id="KW-0131">Cell cycle</keyword>
<keyword id="KW-0132">Cell division</keyword>
<keyword id="KW-0175">Coiled coil</keyword>
<keyword id="KW-0963">Cytoplasm</keyword>
<keyword id="KW-0717">Septation</keyword>
<accession>B2JZB8</accession>
<protein>
    <recommendedName>
        <fullName evidence="1">Cell division protein ZapB</fullName>
    </recommendedName>
</protein>
<proteinExistence type="inferred from homology"/>
<comment type="function">
    <text evidence="1">Non-essential, abundant cell division factor that is required for proper Z-ring formation. It is recruited early to the divisome by direct interaction with FtsZ, stimulating Z-ring assembly and thereby promoting cell division earlier in the cell cycle. Its recruitment to the Z-ring requires functional FtsA or ZipA.</text>
</comment>
<comment type="subunit">
    <text evidence="1">Homodimer. The ends of the coiled-coil dimer bind to each other, forming polymers. Interacts with FtsZ.</text>
</comment>
<comment type="subcellular location">
    <subcellularLocation>
        <location evidence="1">Cytoplasm</location>
    </subcellularLocation>
    <text evidence="1">Localizes to the septum at mid-cell, in a FtsZ-like pattern.</text>
</comment>
<comment type="similarity">
    <text evidence="1">Belongs to the ZapB family.</text>
</comment>